<organism>
    <name type="scientific">Arabidopsis thaliana</name>
    <name type="common">Mouse-ear cress</name>
    <dbReference type="NCBI Taxonomy" id="3702"/>
    <lineage>
        <taxon>Eukaryota</taxon>
        <taxon>Viridiplantae</taxon>
        <taxon>Streptophyta</taxon>
        <taxon>Embryophyta</taxon>
        <taxon>Tracheophyta</taxon>
        <taxon>Spermatophyta</taxon>
        <taxon>Magnoliopsida</taxon>
        <taxon>eudicotyledons</taxon>
        <taxon>Gunneridae</taxon>
        <taxon>Pentapetalae</taxon>
        <taxon>rosids</taxon>
        <taxon>malvids</taxon>
        <taxon>Brassicales</taxon>
        <taxon>Brassicaceae</taxon>
        <taxon>Camelineae</taxon>
        <taxon>Arabidopsis</taxon>
    </lineage>
</organism>
<evidence type="ECO:0000250" key="1"/>
<evidence type="ECO:0000255" key="2"/>
<evidence type="ECO:0000305" key="3"/>
<dbReference type="EC" id="7.2.2.10"/>
<dbReference type="EMBL" id="AL137080">
    <property type="protein sequence ID" value="CAB68139.1"/>
    <property type="molecule type" value="Genomic_DNA"/>
</dbReference>
<dbReference type="EMBL" id="CP002686">
    <property type="protein sequence ID" value="AEE79642.1"/>
    <property type="molecule type" value="Genomic_DNA"/>
</dbReference>
<dbReference type="PIR" id="T45811">
    <property type="entry name" value="T45811"/>
</dbReference>
<dbReference type="RefSeq" id="NP_191292.1">
    <property type="nucleotide sequence ID" value="NM_115593.7"/>
</dbReference>
<dbReference type="SMR" id="Q9M2L4"/>
<dbReference type="FunCoup" id="Q9M2L4">
    <property type="interactions" value="3142"/>
</dbReference>
<dbReference type="IntAct" id="Q9M2L4">
    <property type="interactions" value="2"/>
</dbReference>
<dbReference type="MINT" id="Q9M2L4"/>
<dbReference type="STRING" id="3702.Q9M2L4"/>
<dbReference type="iPTMnet" id="Q9M2L4"/>
<dbReference type="SwissPalm" id="Q9M2L4"/>
<dbReference type="PaxDb" id="3702-AT3G57330.1"/>
<dbReference type="ProteomicsDB" id="244539"/>
<dbReference type="EnsemblPlants" id="AT3G57330.1">
    <property type="protein sequence ID" value="AT3G57330.1"/>
    <property type="gene ID" value="AT3G57330"/>
</dbReference>
<dbReference type="GeneID" id="824900"/>
<dbReference type="Gramene" id="AT3G57330.1">
    <property type="protein sequence ID" value="AT3G57330.1"/>
    <property type="gene ID" value="AT3G57330"/>
</dbReference>
<dbReference type="KEGG" id="ath:AT3G57330"/>
<dbReference type="Araport" id="AT3G57330"/>
<dbReference type="TAIR" id="AT3G57330">
    <property type="gene designation" value="ACA11"/>
</dbReference>
<dbReference type="eggNOG" id="KOG0204">
    <property type="taxonomic scope" value="Eukaryota"/>
</dbReference>
<dbReference type="HOGENOM" id="CLU_002360_9_2_1"/>
<dbReference type="InParanoid" id="Q9M2L4"/>
<dbReference type="PhylomeDB" id="Q9M2L4"/>
<dbReference type="BioCyc" id="ARA:AT3G57330-MONOMER"/>
<dbReference type="PRO" id="PR:Q9M2L4"/>
<dbReference type="Proteomes" id="UP000006548">
    <property type="component" value="Chromosome 3"/>
</dbReference>
<dbReference type="ExpressionAtlas" id="Q9M2L4">
    <property type="expression patterns" value="baseline and differential"/>
</dbReference>
<dbReference type="GO" id="GO:0009507">
    <property type="term" value="C:chloroplast"/>
    <property type="evidence" value="ECO:0007005"/>
    <property type="project" value="TAIR"/>
</dbReference>
<dbReference type="GO" id="GO:0005794">
    <property type="term" value="C:Golgi apparatus"/>
    <property type="evidence" value="ECO:0007005"/>
    <property type="project" value="TAIR"/>
</dbReference>
<dbReference type="GO" id="GO:0000325">
    <property type="term" value="C:plant-type vacuole"/>
    <property type="evidence" value="ECO:0007005"/>
    <property type="project" value="TAIR"/>
</dbReference>
<dbReference type="GO" id="GO:0009705">
    <property type="term" value="C:plant-type vacuole membrane"/>
    <property type="evidence" value="ECO:0000314"/>
    <property type="project" value="TAIR"/>
</dbReference>
<dbReference type="GO" id="GO:0005886">
    <property type="term" value="C:plasma membrane"/>
    <property type="evidence" value="ECO:0007005"/>
    <property type="project" value="TAIR"/>
</dbReference>
<dbReference type="GO" id="GO:0005773">
    <property type="term" value="C:vacuole"/>
    <property type="evidence" value="ECO:0007005"/>
    <property type="project" value="TAIR"/>
</dbReference>
<dbReference type="GO" id="GO:0005524">
    <property type="term" value="F:ATP binding"/>
    <property type="evidence" value="ECO:0007669"/>
    <property type="project" value="UniProtKB-KW"/>
</dbReference>
<dbReference type="GO" id="GO:0016887">
    <property type="term" value="F:ATP hydrolysis activity"/>
    <property type="evidence" value="ECO:0007669"/>
    <property type="project" value="InterPro"/>
</dbReference>
<dbReference type="GO" id="GO:0005516">
    <property type="term" value="F:calmodulin binding"/>
    <property type="evidence" value="ECO:0007669"/>
    <property type="project" value="UniProtKB-KW"/>
</dbReference>
<dbReference type="GO" id="GO:0046872">
    <property type="term" value="F:metal ion binding"/>
    <property type="evidence" value="ECO:0007669"/>
    <property type="project" value="UniProtKB-KW"/>
</dbReference>
<dbReference type="GO" id="GO:0005388">
    <property type="term" value="F:P-type calcium transporter activity"/>
    <property type="evidence" value="ECO:0000250"/>
    <property type="project" value="TAIR"/>
</dbReference>
<dbReference type="GO" id="GO:0042742">
    <property type="term" value="P:defense response to bacterium"/>
    <property type="evidence" value="ECO:0000316"/>
    <property type="project" value="TAIR"/>
</dbReference>
<dbReference type="GO" id="GO:0055081">
    <property type="term" value="P:monoatomic anion homeostasis"/>
    <property type="evidence" value="ECO:0000315"/>
    <property type="project" value="TAIR"/>
</dbReference>
<dbReference type="GO" id="GO:0043069">
    <property type="term" value="P:negative regulation of programmed cell death"/>
    <property type="evidence" value="ECO:0000316"/>
    <property type="project" value="TAIR"/>
</dbReference>
<dbReference type="CDD" id="cd02081">
    <property type="entry name" value="P-type_ATPase_Ca_PMCA-like"/>
    <property type="match status" value="1"/>
</dbReference>
<dbReference type="FunFam" id="1.20.1110.10:FF:000039">
    <property type="entry name" value="Calcium-transporting ATPase"/>
    <property type="match status" value="1"/>
</dbReference>
<dbReference type="FunFam" id="1.20.5.170:FF:000026">
    <property type="entry name" value="Calcium-transporting ATPase"/>
    <property type="match status" value="1"/>
</dbReference>
<dbReference type="FunFam" id="2.70.150.10:FF:000006">
    <property type="entry name" value="Calcium-transporting ATPase"/>
    <property type="match status" value="1"/>
</dbReference>
<dbReference type="FunFam" id="3.40.1110.10:FF:000011">
    <property type="entry name" value="Calcium-transporting ATPase"/>
    <property type="match status" value="1"/>
</dbReference>
<dbReference type="FunFam" id="3.40.50.1000:FF:000011">
    <property type="entry name" value="Calcium-transporting ATPase"/>
    <property type="match status" value="1"/>
</dbReference>
<dbReference type="Gene3D" id="1.20.5.170">
    <property type="match status" value="1"/>
</dbReference>
<dbReference type="Gene3D" id="3.40.1110.10">
    <property type="entry name" value="Calcium-transporting ATPase, cytoplasmic domain N"/>
    <property type="match status" value="1"/>
</dbReference>
<dbReference type="Gene3D" id="2.70.150.10">
    <property type="entry name" value="Calcium-transporting ATPase, cytoplasmic transduction domain A"/>
    <property type="match status" value="1"/>
</dbReference>
<dbReference type="Gene3D" id="1.20.1110.10">
    <property type="entry name" value="Calcium-transporting ATPase, transmembrane domain"/>
    <property type="match status" value="1"/>
</dbReference>
<dbReference type="Gene3D" id="3.40.50.1000">
    <property type="entry name" value="HAD superfamily/HAD-like"/>
    <property type="match status" value="1"/>
</dbReference>
<dbReference type="InterPro" id="IPR006068">
    <property type="entry name" value="ATPase_P-typ_cation-transptr_C"/>
</dbReference>
<dbReference type="InterPro" id="IPR004014">
    <property type="entry name" value="ATPase_P-typ_cation-transptr_N"/>
</dbReference>
<dbReference type="InterPro" id="IPR023299">
    <property type="entry name" value="ATPase_P-typ_cyto_dom_N"/>
</dbReference>
<dbReference type="InterPro" id="IPR018303">
    <property type="entry name" value="ATPase_P-typ_P_site"/>
</dbReference>
<dbReference type="InterPro" id="IPR023298">
    <property type="entry name" value="ATPase_P-typ_TM_dom_sf"/>
</dbReference>
<dbReference type="InterPro" id="IPR008250">
    <property type="entry name" value="ATPase_P-typ_transduc_dom_A_sf"/>
</dbReference>
<dbReference type="InterPro" id="IPR024750">
    <property type="entry name" value="Ca_ATPase_N_dom"/>
</dbReference>
<dbReference type="InterPro" id="IPR036412">
    <property type="entry name" value="HAD-like_sf"/>
</dbReference>
<dbReference type="InterPro" id="IPR023214">
    <property type="entry name" value="HAD_sf"/>
</dbReference>
<dbReference type="InterPro" id="IPR006408">
    <property type="entry name" value="P-type_ATPase_IIB"/>
</dbReference>
<dbReference type="InterPro" id="IPR001757">
    <property type="entry name" value="P_typ_ATPase"/>
</dbReference>
<dbReference type="InterPro" id="IPR044492">
    <property type="entry name" value="P_typ_ATPase_HD_dom"/>
</dbReference>
<dbReference type="NCBIfam" id="TIGR01517">
    <property type="entry name" value="ATPase-IIB_Ca"/>
    <property type="match status" value="1"/>
</dbReference>
<dbReference type="NCBIfam" id="TIGR01494">
    <property type="entry name" value="ATPase_P-type"/>
    <property type="match status" value="3"/>
</dbReference>
<dbReference type="PANTHER" id="PTHR24093:SF462">
    <property type="entry name" value="CALCIUM-TRANSPORTING ATPASE 11, PLASMA MEMBRANE-TYPE-RELATED"/>
    <property type="match status" value="1"/>
</dbReference>
<dbReference type="PANTHER" id="PTHR24093">
    <property type="entry name" value="CATION TRANSPORTING ATPASE"/>
    <property type="match status" value="1"/>
</dbReference>
<dbReference type="Pfam" id="PF12515">
    <property type="entry name" value="CaATP_NAI"/>
    <property type="match status" value="1"/>
</dbReference>
<dbReference type="Pfam" id="PF13246">
    <property type="entry name" value="Cation_ATPase"/>
    <property type="match status" value="1"/>
</dbReference>
<dbReference type="Pfam" id="PF00689">
    <property type="entry name" value="Cation_ATPase_C"/>
    <property type="match status" value="1"/>
</dbReference>
<dbReference type="Pfam" id="PF00690">
    <property type="entry name" value="Cation_ATPase_N"/>
    <property type="match status" value="1"/>
</dbReference>
<dbReference type="Pfam" id="PF00122">
    <property type="entry name" value="E1-E2_ATPase"/>
    <property type="match status" value="1"/>
</dbReference>
<dbReference type="Pfam" id="PF00702">
    <property type="entry name" value="Hydrolase"/>
    <property type="match status" value="1"/>
</dbReference>
<dbReference type="PRINTS" id="PR00119">
    <property type="entry name" value="CATATPASE"/>
</dbReference>
<dbReference type="PRINTS" id="PR00120">
    <property type="entry name" value="HATPASE"/>
</dbReference>
<dbReference type="SFLD" id="SFLDG00002">
    <property type="entry name" value="C1.7:_P-type_atpase_like"/>
    <property type="match status" value="1"/>
</dbReference>
<dbReference type="SFLD" id="SFLDF00027">
    <property type="entry name" value="p-type_atpase"/>
    <property type="match status" value="1"/>
</dbReference>
<dbReference type="SMART" id="SM00831">
    <property type="entry name" value="Cation_ATPase_N"/>
    <property type="match status" value="1"/>
</dbReference>
<dbReference type="SUPFAM" id="SSF81653">
    <property type="entry name" value="Calcium ATPase, transduction domain A"/>
    <property type="match status" value="1"/>
</dbReference>
<dbReference type="SUPFAM" id="SSF81665">
    <property type="entry name" value="Calcium ATPase, transmembrane domain M"/>
    <property type="match status" value="1"/>
</dbReference>
<dbReference type="SUPFAM" id="SSF56784">
    <property type="entry name" value="HAD-like"/>
    <property type="match status" value="1"/>
</dbReference>
<dbReference type="SUPFAM" id="SSF81660">
    <property type="entry name" value="Metal cation-transporting ATPase, ATP-binding domain N"/>
    <property type="match status" value="1"/>
</dbReference>
<dbReference type="PROSITE" id="PS00154">
    <property type="entry name" value="ATPASE_E1_E2"/>
    <property type="match status" value="1"/>
</dbReference>
<comment type="function">
    <text evidence="1">This magnesium-dependent enzyme catalyzes the hydrolysis of ATP coupled with the translocation of calcium from the cytosol out of the cell or into organelles.</text>
</comment>
<comment type="catalytic activity">
    <reaction>
        <text>Ca(2+)(in) + ATP + H2O = Ca(2+)(out) + ADP + phosphate + H(+)</text>
        <dbReference type="Rhea" id="RHEA:18105"/>
        <dbReference type="ChEBI" id="CHEBI:15377"/>
        <dbReference type="ChEBI" id="CHEBI:15378"/>
        <dbReference type="ChEBI" id="CHEBI:29108"/>
        <dbReference type="ChEBI" id="CHEBI:30616"/>
        <dbReference type="ChEBI" id="CHEBI:43474"/>
        <dbReference type="ChEBI" id="CHEBI:456216"/>
        <dbReference type="EC" id="7.2.2.10"/>
    </reaction>
</comment>
<comment type="activity regulation">
    <text evidence="1">Activated by calmodulin.</text>
</comment>
<comment type="interaction">
    <interactant intactId="EBI-7522268">
        <id>Q9M2L4</id>
    </interactant>
    <interactant intactId="EBI-1235664">
        <id>P25854</id>
        <label>CAM4</label>
    </interactant>
    <organismsDiffer>false</organismsDiffer>
    <experiments>2</experiments>
</comment>
<comment type="subcellular location">
    <subcellularLocation>
        <location>Membrane</location>
        <topology>Multi-pass membrane protein</topology>
    </subcellularLocation>
</comment>
<comment type="domain">
    <text evidence="1">The N-terminus contains an autoinhibitory calmodulin-binding domain, which binds calmodulin in a calcium-dependent fashion.</text>
</comment>
<comment type="similarity">
    <text evidence="3">Belongs to the cation transport ATPase (P-type) (TC 3.A.3) family. Type IIB subfamily.</text>
</comment>
<keyword id="KW-0067">ATP-binding</keyword>
<keyword id="KW-0106">Calcium</keyword>
<keyword id="KW-0109">Calcium transport</keyword>
<keyword id="KW-0112">Calmodulin-binding</keyword>
<keyword id="KW-0406">Ion transport</keyword>
<keyword id="KW-0460">Magnesium</keyword>
<keyword id="KW-0472">Membrane</keyword>
<keyword id="KW-0479">Metal-binding</keyword>
<keyword id="KW-0547">Nucleotide-binding</keyword>
<keyword id="KW-1185">Reference proteome</keyword>
<keyword id="KW-1278">Translocase</keyword>
<keyword id="KW-0812">Transmembrane</keyword>
<keyword id="KW-1133">Transmembrane helix</keyword>
<keyword id="KW-0813">Transport</keyword>
<gene>
    <name type="primary">ACA11</name>
    <name type="ordered locus">At3g57330</name>
    <name type="ORF">F28O9.180</name>
</gene>
<proteinExistence type="evidence at protein level"/>
<name>ACA11_ARATH</name>
<feature type="chain" id="PRO_0000046417" description="Putative calcium-transporting ATPase 11, plasma membrane-type">
    <location>
        <begin position="1"/>
        <end position="1025"/>
    </location>
</feature>
<feature type="topological domain" description="Cytoplasmic" evidence="2">
    <location>
        <begin position="1"/>
        <end position="157"/>
    </location>
</feature>
<feature type="transmembrane region" description="Helical" evidence="2">
    <location>
        <begin position="158"/>
        <end position="178"/>
    </location>
</feature>
<feature type="topological domain" description="Lumenal" evidence="2">
    <location>
        <begin position="179"/>
        <end position="196"/>
    </location>
</feature>
<feature type="transmembrane region" description="Helical" evidence="2">
    <location>
        <begin position="197"/>
        <end position="217"/>
    </location>
</feature>
<feature type="topological domain" description="Cytoplasmic" evidence="2">
    <location>
        <begin position="218"/>
        <end position="345"/>
    </location>
</feature>
<feature type="transmembrane region" description="Helical" evidence="2">
    <location>
        <begin position="346"/>
        <end position="365"/>
    </location>
</feature>
<feature type="topological domain" description="Lumenal" evidence="2">
    <location>
        <begin position="366"/>
        <end position="395"/>
    </location>
</feature>
<feature type="transmembrane region" description="Helical" evidence="2">
    <location>
        <begin position="396"/>
        <end position="413"/>
    </location>
</feature>
<feature type="topological domain" description="Cytoplasmic" evidence="2">
    <location>
        <begin position="414"/>
        <end position="801"/>
    </location>
</feature>
<feature type="transmembrane region" description="Helical" evidence="2">
    <location>
        <begin position="802"/>
        <end position="820"/>
    </location>
</feature>
<feature type="topological domain" description="Lumenal" evidence="2">
    <location>
        <begin position="821"/>
        <end position="831"/>
    </location>
</feature>
<feature type="transmembrane region" description="Helical" evidence="2">
    <location>
        <begin position="832"/>
        <end position="852"/>
    </location>
</feature>
<feature type="topological domain" description="Cytoplasmic" evidence="2">
    <location>
        <begin position="853"/>
        <end position="872"/>
    </location>
</feature>
<feature type="transmembrane region" description="Helical" evidence="2">
    <location>
        <begin position="873"/>
        <end position="895"/>
    </location>
</feature>
<feature type="topological domain" description="Lumenal" evidence="2">
    <location>
        <begin position="896"/>
        <end position="907"/>
    </location>
</feature>
<feature type="transmembrane region" description="Helical" evidence="2">
    <location>
        <begin position="908"/>
        <end position="929"/>
    </location>
</feature>
<feature type="topological domain" description="Cytoplasmic" evidence="2">
    <location>
        <begin position="930"/>
        <end position="947"/>
    </location>
</feature>
<feature type="transmembrane region" description="Helical" evidence="2">
    <location>
        <begin position="948"/>
        <end position="969"/>
    </location>
</feature>
<feature type="topological domain" description="Lumenal" evidence="2">
    <location>
        <begin position="970"/>
        <end position="979"/>
    </location>
</feature>
<feature type="transmembrane region" description="Helical" evidence="2">
    <location>
        <begin position="980"/>
        <end position="1001"/>
    </location>
</feature>
<feature type="topological domain" description="Cytoplasmic" evidence="2">
    <location>
        <begin position="1002"/>
        <end position="1025"/>
    </location>
</feature>
<feature type="region of interest" description="Interaction with calmodulin" evidence="3">
    <location>
        <begin position="19"/>
        <end position="30"/>
    </location>
</feature>
<feature type="active site" description="4-aspartylphosphate intermediate" evidence="1">
    <location>
        <position position="451"/>
    </location>
</feature>
<feature type="binding site" evidence="1">
    <location>
        <position position="746"/>
    </location>
    <ligand>
        <name>Mg(2+)</name>
        <dbReference type="ChEBI" id="CHEBI:18420"/>
    </ligand>
</feature>
<feature type="binding site" evidence="1">
    <location>
        <position position="750"/>
    </location>
    <ligand>
        <name>Mg(2+)</name>
        <dbReference type="ChEBI" id="CHEBI:18420"/>
    </ligand>
</feature>
<sequence>MSNLLKDFEVASKNPSLEARQRWRSSVGLVKNRARRFRMISNLDKLAENEKKRCQIQEKIRVVFYVQKAAFQFIDAGARPEYKLTDEVKKAGFYVEADELASMVRNHDTKSLTKIGGPEGIAQKVSVSLAEGVRSSELHIREKIYGENRYTEKPARSFLTFVWEALQDITLIILMVCAVVSIGVGVATEGFPKGMYDGTGILLSIILVVMVTAISDYKQSLQFRDLDREKKKIIIQVTRDGSRQEVSIHDLVVGDVVHLSIGDQVPADGIFISGYNLEIDESSLSGESEPSHVNKEKPFLLSGTKVQNGSAKMLVTTVGMRTEWGKLMDTLSEGGEDETPLQVKLNGVATIIGKIGLGFAVLTFVVLCIRFVVEKATAGSITEWSSEDALTLLDYFAIAVTIIVVAVPEGLPLAVTLSLAFAMKQLMSDRALVRHLAACETMGSSTCICTDKTGTLTTNHMVVNKVWICENIKERQEENFQLNLSEQVKNILIQAIFQNTGSEVVKDKEGKTQILGSPTERAILEFGLLLGGDVDTQRREHKILKIEPFNSDKKKMSVLTSHSGGKVRAFCKGASEIVLKMCEKVVDSNGESVPLSEEKIASISDVIEGFASEALRTLCLVYTDLDEAPRGDLPNGGYTLVAVVGIKDPVRPGVREAVQTCQAAGITVRMVTGDNISTAKAIAKECGILTAGGVAIEGSDFRNLPPHEMRAILPKIQVMARSLPLDKHTLVNNLRKMGEVVAVTGDGTNDAPALHEADIGLAMGIAGTEVAKENADVIIMDDNFATIVNVAKWGRAVYINIQKFVQFQLTVNVVALIINFVSACITGSAPLTAVQLLWVNMIMDTLGALALATEPPNEGLMKRQPIGRTASFITRAMWRNIIGQSIYQLIVLGILNFAGKQILNLNGPDSTIVLNTIIFNSFVFCQVFNEVNSREIEKINVFEGMFKSWVFVAVMTATVGFQVIIVEFLGAFASTVPLSWQHWLLCILIGSVSMILAVGLKCIPVESNRHHDGYELLPSGPSDSA</sequence>
<accession>Q9M2L4</accession>
<reference key="1">
    <citation type="journal article" date="2000" name="Nature">
        <title>Sequence and analysis of chromosome 3 of the plant Arabidopsis thaliana.</title>
        <authorList>
            <person name="Salanoubat M."/>
            <person name="Lemcke K."/>
            <person name="Rieger M."/>
            <person name="Ansorge W."/>
            <person name="Unseld M."/>
            <person name="Fartmann B."/>
            <person name="Valle G."/>
            <person name="Bloecker H."/>
            <person name="Perez-Alonso M."/>
            <person name="Obermaier B."/>
            <person name="Delseny M."/>
            <person name="Boutry M."/>
            <person name="Grivell L.A."/>
            <person name="Mache R."/>
            <person name="Puigdomenech P."/>
            <person name="De Simone V."/>
            <person name="Choisne N."/>
            <person name="Artiguenave F."/>
            <person name="Robert C."/>
            <person name="Brottier P."/>
            <person name="Wincker P."/>
            <person name="Cattolico L."/>
            <person name="Weissenbach J."/>
            <person name="Saurin W."/>
            <person name="Quetier F."/>
            <person name="Schaefer M."/>
            <person name="Mueller-Auer S."/>
            <person name="Gabel C."/>
            <person name="Fuchs M."/>
            <person name="Benes V."/>
            <person name="Wurmbach E."/>
            <person name="Drzonek H."/>
            <person name="Erfle H."/>
            <person name="Jordan N."/>
            <person name="Bangert S."/>
            <person name="Wiedelmann R."/>
            <person name="Kranz H."/>
            <person name="Voss H."/>
            <person name="Holland R."/>
            <person name="Brandt P."/>
            <person name="Nyakatura G."/>
            <person name="Vezzi A."/>
            <person name="D'Angelo M."/>
            <person name="Pallavicini A."/>
            <person name="Toppo S."/>
            <person name="Simionati B."/>
            <person name="Conrad A."/>
            <person name="Hornischer K."/>
            <person name="Kauer G."/>
            <person name="Loehnert T.-H."/>
            <person name="Nordsiek G."/>
            <person name="Reichelt J."/>
            <person name="Scharfe M."/>
            <person name="Schoen O."/>
            <person name="Bargues M."/>
            <person name="Terol J."/>
            <person name="Climent J."/>
            <person name="Navarro P."/>
            <person name="Collado C."/>
            <person name="Perez-Perez A."/>
            <person name="Ottenwaelder B."/>
            <person name="Duchemin D."/>
            <person name="Cooke R."/>
            <person name="Laudie M."/>
            <person name="Berger-Llauro C."/>
            <person name="Purnelle B."/>
            <person name="Masuy D."/>
            <person name="de Haan M."/>
            <person name="Maarse A.C."/>
            <person name="Alcaraz J.-P."/>
            <person name="Cottet A."/>
            <person name="Casacuberta E."/>
            <person name="Monfort A."/>
            <person name="Argiriou A."/>
            <person name="Flores M."/>
            <person name="Liguori R."/>
            <person name="Vitale D."/>
            <person name="Mannhaupt G."/>
            <person name="Haase D."/>
            <person name="Schoof H."/>
            <person name="Rudd S."/>
            <person name="Zaccaria P."/>
            <person name="Mewes H.-W."/>
            <person name="Mayer K.F.X."/>
            <person name="Kaul S."/>
            <person name="Town C.D."/>
            <person name="Koo H.L."/>
            <person name="Tallon L.J."/>
            <person name="Jenkins J."/>
            <person name="Rooney T."/>
            <person name="Rizzo M."/>
            <person name="Walts A."/>
            <person name="Utterback T."/>
            <person name="Fujii C.Y."/>
            <person name="Shea T.P."/>
            <person name="Creasy T.H."/>
            <person name="Haas B."/>
            <person name="Maiti R."/>
            <person name="Wu D."/>
            <person name="Peterson J."/>
            <person name="Van Aken S."/>
            <person name="Pai G."/>
            <person name="Militscher J."/>
            <person name="Sellers P."/>
            <person name="Gill J.E."/>
            <person name="Feldblyum T.V."/>
            <person name="Preuss D."/>
            <person name="Lin X."/>
            <person name="Nierman W.C."/>
            <person name="Salzberg S.L."/>
            <person name="White O."/>
            <person name="Venter J.C."/>
            <person name="Fraser C.M."/>
            <person name="Kaneko T."/>
            <person name="Nakamura Y."/>
            <person name="Sato S."/>
            <person name="Kato T."/>
            <person name="Asamizu E."/>
            <person name="Sasamoto S."/>
            <person name="Kimura T."/>
            <person name="Idesawa K."/>
            <person name="Kawashima K."/>
            <person name="Kishida Y."/>
            <person name="Kiyokawa C."/>
            <person name="Kohara M."/>
            <person name="Matsumoto M."/>
            <person name="Matsuno A."/>
            <person name="Muraki A."/>
            <person name="Nakayama S."/>
            <person name="Nakazaki N."/>
            <person name="Shinpo S."/>
            <person name="Takeuchi C."/>
            <person name="Wada T."/>
            <person name="Watanabe A."/>
            <person name="Yamada M."/>
            <person name="Yasuda M."/>
            <person name="Tabata S."/>
        </authorList>
    </citation>
    <scope>NUCLEOTIDE SEQUENCE [LARGE SCALE GENOMIC DNA]</scope>
    <source>
        <strain>cv. Columbia</strain>
    </source>
</reference>
<reference key="2">
    <citation type="journal article" date="2017" name="Plant J.">
        <title>Araport11: a complete reannotation of the Arabidopsis thaliana reference genome.</title>
        <authorList>
            <person name="Cheng C.Y."/>
            <person name="Krishnakumar V."/>
            <person name="Chan A.P."/>
            <person name="Thibaud-Nissen F."/>
            <person name="Schobel S."/>
            <person name="Town C.D."/>
        </authorList>
    </citation>
    <scope>GENOME REANNOTATION</scope>
    <source>
        <strain>cv. Columbia</strain>
    </source>
</reference>
<protein>
    <recommendedName>
        <fullName>Putative calcium-transporting ATPase 11, plasma membrane-type</fullName>
        <ecNumber>7.2.2.10</ecNumber>
    </recommendedName>
    <alternativeName>
        <fullName>Ca(2+)-ATPase isoform 11</fullName>
    </alternativeName>
</protein>